<keyword id="KW-1015">Disulfide bond</keyword>
<keyword id="KW-0426">Late protein</keyword>
<keyword id="KW-0676">Redox-active center</keyword>
<keyword id="KW-1185">Reference proteome</keyword>
<gene>
    <name type="primary">OPG128</name>
    <name type="ORF">A2.5L</name>
</gene>
<name>PG128_VACCC</name>
<evidence type="ECO:0000250" key="1">
    <source>
        <dbReference type="UniProtKB" id="P07608"/>
    </source>
</evidence>
<evidence type="ECO:0000255" key="2"/>
<evidence type="ECO:0000305" key="3"/>
<reference key="1">
    <citation type="journal article" date="1990" name="Virology">
        <title>The complete DNA sequence of vaccinia virus.</title>
        <authorList>
            <person name="Goebel S.J."/>
            <person name="Johnson G.P."/>
            <person name="Perkus M.E."/>
            <person name="Davis S.W."/>
            <person name="Winslow J.P."/>
            <person name="Paoletti E."/>
        </authorList>
    </citation>
    <scope>NUCLEOTIDE SEQUENCE [LARGE SCALE GENOMIC DNA]</scope>
</reference>
<reference key="2">
    <citation type="journal article" date="1990" name="Virology">
        <title>Appendix to 'The complete DNA sequence of vaccinia virus'.</title>
        <authorList>
            <person name="Goebel S.J."/>
            <person name="Johnson G.P."/>
            <person name="Perkus M.E."/>
            <person name="Davis S.W."/>
            <person name="Winslow J.P."/>
            <person name="Paoletti E."/>
        </authorList>
    </citation>
    <scope>NUCLEOTIDE SEQUENCE [LARGE SCALE GENOMIC DNA]</scope>
</reference>
<reference key="3">
    <citation type="journal article" date="2002" name="Virology">
        <title>Expression of the vaccinia virus A2.5L redox protein is required for virion morphogenesis.</title>
        <authorList>
            <person name="Senkevich T.G."/>
            <person name="White C.L."/>
            <person name="Weisberg A."/>
            <person name="Granek J.A."/>
            <person name="Wolffe E.J."/>
            <person name="Koonin E.V."/>
            <person name="Moss B."/>
        </authorList>
    </citation>
    <scope>IDENTIFICATION</scope>
</reference>
<feature type="chain" id="PRO_0000411964" description="Protein OPG128">
    <location>
        <begin position="1"/>
        <end position="76"/>
    </location>
</feature>
<feature type="disulfide bond" description="Redox-active" evidence="2">
    <location>
        <begin position="17"/>
        <end position="21"/>
    </location>
</feature>
<organismHost>
    <name type="scientific">Homo sapiens</name>
    <name type="common">Human</name>
    <dbReference type="NCBI Taxonomy" id="9606"/>
</organismHost>
<proteinExistence type="evidence at transcript level"/>
<sequence>MSWYEKYNIVLNPPKRCSSACADNLTTILAEDGNHIRAILYSQPKKLKILQDFLATSRNKMFLYKILDDEIRRVLT</sequence>
<accession>P0CK20</accession>
<dbReference type="EMBL" id="M35027">
    <property type="status" value="NOT_ANNOTATED_CDS"/>
    <property type="molecule type" value="Genomic_DNA"/>
</dbReference>
<dbReference type="Proteomes" id="UP000008269">
    <property type="component" value="Segment"/>
</dbReference>
<dbReference type="InterPro" id="IPR007952">
    <property type="entry name" value="Poxvirus_A2.5L"/>
</dbReference>
<dbReference type="Pfam" id="PF05288">
    <property type="entry name" value="Pox_A3L"/>
    <property type="match status" value="1"/>
</dbReference>
<organism>
    <name type="scientific">Vaccinia virus (strain Copenhagen)</name>
    <name type="common">VACV</name>
    <dbReference type="NCBI Taxonomy" id="10249"/>
    <lineage>
        <taxon>Viruses</taxon>
        <taxon>Varidnaviria</taxon>
        <taxon>Bamfordvirae</taxon>
        <taxon>Nucleocytoviricota</taxon>
        <taxon>Pokkesviricetes</taxon>
        <taxon>Chitovirales</taxon>
        <taxon>Poxviridae</taxon>
        <taxon>Chordopoxvirinae</taxon>
        <taxon>Orthopoxvirus</taxon>
        <taxon>Vaccinia virus</taxon>
    </lineage>
</organism>
<comment type="function">
    <text evidence="1">Late protein which probably participates in disulfide bond formation by functioning as a thiol-disulfide transfer protein between membrane-associated OPG072 and OPG08. The complete pathway for formation of disulfide bonds in intracellular virion membrane proteins sequentially involves oxidation of OPG072, OPG128 and OPG08.</text>
</comment>
<comment type="subunit">
    <text evidence="1">Interacts with sulfhydryl oxidase OPG072; this interaction involves formation of a transient disulfide-bonded intermediate, allowing disulfide bond transfer. Interacts with OPG088; this interaction involves formation of a transient disulfide-bonded intermediate, allowing disulfide bond transfer.</text>
</comment>
<comment type="induction">
    <text>Expressed in the late phase of the viral replicative cycle.</text>
</comment>
<comment type="similarity">
    <text evidence="3">Belongs to the orthopoxvirus OPG128 family.</text>
</comment>
<protein>
    <recommendedName>
        <fullName>Protein OPG128</fullName>
    </recommendedName>
</protein>